<sequence length="44" mass="5180">MKRTFQPSNLKRKRTHGFRARMKTLSGRKVIRNRRAKGRAKLAA</sequence>
<dbReference type="EMBL" id="CP000439">
    <property type="protein sequence ID" value="ABK88987.1"/>
    <property type="molecule type" value="Genomic_DNA"/>
</dbReference>
<dbReference type="RefSeq" id="WP_003014180.1">
    <property type="nucleotide sequence ID" value="NZ_CP009633.1"/>
</dbReference>
<dbReference type="SMR" id="A0Q422"/>
<dbReference type="GeneID" id="93255665"/>
<dbReference type="KEGG" id="ftn:FTN_0076"/>
<dbReference type="KEGG" id="ftx:AW25_125"/>
<dbReference type="BioCyc" id="FTUL401614:G1G75-79-MONOMER"/>
<dbReference type="Proteomes" id="UP000000762">
    <property type="component" value="Chromosome"/>
</dbReference>
<dbReference type="GO" id="GO:1990904">
    <property type="term" value="C:ribonucleoprotein complex"/>
    <property type="evidence" value="ECO:0007669"/>
    <property type="project" value="UniProtKB-KW"/>
</dbReference>
<dbReference type="GO" id="GO:0005840">
    <property type="term" value="C:ribosome"/>
    <property type="evidence" value="ECO:0007669"/>
    <property type="project" value="UniProtKB-KW"/>
</dbReference>
<dbReference type="GO" id="GO:0003735">
    <property type="term" value="F:structural constituent of ribosome"/>
    <property type="evidence" value="ECO:0007669"/>
    <property type="project" value="InterPro"/>
</dbReference>
<dbReference type="GO" id="GO:0006412">
    <property type="term" value="P:translation"/>
    <property type="evidence" value="ECO:0007669"/>
    <property type="project" value="UniProtKB-UniRule"/>
</dbReference>
<dbReference type="FunFam" id="1.10.287.3980:FF:000001">
    <property type="entry name" value="Mitochondrial ribosomal protein L34"/>
    <property type="match status" value="1"/>
</dbReference>
<dbReference type="Gene3D" id="1.10.287.3980">
    <property type="match status" value="1"/>
</dbReference>
<dbReference type="HAMAP" id="MF_00391">
    <property type="entry name" value="Ribosomal_bL34"/>
    <property type="match status" value="1"/>
</dbReference>
<dbReference type="InterPro" id="IPR000271">
    <property type="entry name" value="Ribosomal_bL34"/>
</dbReference>
<dbReference type="InterPro" id="IPR020939">
    <property type="entry name" value="Ribosomal_bL34_CS"/>
</dbReference>
<dbReference type="NCBIfam" id="TIGR01030">
    <property type="entry name" value="rpmH_bact"/>
    <property type="match status" value="1"/>
</dbReference>
<dbReference type="PANTHER" id="PTHR14503:SF4">
    <property type="entry name" value="LARGE RIBOSOMAL SUBUNIT PROTEIN BL34M"/>
    <property type="match status" value="1"/>
</dbReference>
<dbReference type="PANTHER" id="PTHR14503">
    <property type="entry name" value="MITOCHONDRIAL RIBOSOMAL PROTEIN 34 FAMILY MEMBER"/>
    <property type="match status" value="1"/>
</dbReference>
<dbReference type="Pfam" id="PF00468">
    <property type="entry name" value="Ribosomal_L34"/>
    <property type="match status" value="1"/>
</dbReference>
<dbReference type="PROSITE" id="PS00784">
    <property type="entry name" value="RIBOSOMAL_L34"/>
    <property type="match status" value="1"/>
</dbReference>
<keyword id="KW-0687">Ribonucleoprotein</keyword>
<keyword id="KW-0689">Ribosomal protein</keyword>
<feature type="chain" id="PRO_1000013341" description="Large ribosomal subunit protein bL34">
    <location>
        <begin position="1"/>
        <end position="44"/>
    </location>
</feature>
<comment type="similarity">
    <text evidence="1">Belongs to the bacterial ribosomal protein bL34 family.</text>
</comment>
<evidence type="ECO:0000255" key="1">
    <source>
        <dbReference type="HAMAP-Rule" id="MF_00391"/>
    </source>
</evidence>
<evidence type="ECO:0000305" key="2"/>
<organism>
    <name type="scientific">Francisella tularensis subsp. novicida (strain U112)</name>
    <dbReference type="NCBI Taxonomy" id="401614"/>
    <lineage>
        <taxon>Bacteria</taxon>
        <taxon>Pseudomonadati</taxon>
        <taxon>Pseudomonadota</taxon>
        <taxon>Gammaproteobacteria</taxon>
        <taxon>Thiotrichales</taxon>
        <taxon>Francisellaceae</taxon>
        <taxon>Francisella</taxon>
    </lineage>
</organism>
<name>RL34_FRATN</name>
<protein>
    <recommendedName>
        <fullName evidence="1">Large ribosomal subunit protein bL34</fullName>
    </recommendedName>
    <alternativeName>
        <fullName evidence="2">50S ribosomal protein L34</fullName>
    </alternativeName>
</protein>
<gene>
    <name evidence="1" type="primary">rpmH</name>
    <name type="ordered locus">FTN_0076</name>
</gene>
<accession>A0Q422</accession>
<proteinExistence type="inferred from homology"/>
<reference key="1">
    <citation type="journal article" date="2007" name="Genome Biol.">
        <title>Comparison of Francisella tularensis genomes reveals evolutionary events associated with the emergence of human pathogenic strains.</title>
        <authorList>
            <person name="Rohmer L."/>
            <person name="Fong C."/>
            <person name="Abmayr S."/>
            <person name="Wasnick M."/>
            <person name="Larson Freeman T.J."/>
            <person name="Radey M."/>
            <person name="Guina T."/>
            <person name="Svensson K."/>
            <person name="Hayden H.S."/>
            <person name="Jacobs M."/>
            <person name="Gallagher L.A."/>
            <person name="Manoil C."/>
            <person name="Ernst R.K."/>
            <person name="Drees B."/>
            <person name="Buckley D."/>
            <person name="Haugen E."/>
            <person name="Bovee D."/>
            <person name="Zhou Y."/>
            <person name="Chang J."/>
            <person name="Levy R."/>
            <person name="Lim R."/>
            <person name="Gillett W."/>
            <person name="Guenthener D."/>
            <person name="Kang A."/>
            <person name="Shaffer S.A."/>
            <person name="Taylor G."/>
            <person name="Chen J."/>
            <person name="Gallis B."/>
            <person name="D'Argenio D.A."/>
            <person name="Forsman M."/>
            <person name="Olson M.V."/>
            <person name="Goodlett D.R."/>
            <person name="Kaul R."/>
            <person name="Miller S.I."/>
            <person name="Brittnacher M.J."/>
        </authorList>
    </citation>
    <scope>NUCLEOTIDE SEQUENCE [LARGE SCALE GENOMIC DNA]</scope>
    <source>
        <strain>U112</strain>
    </source>
</reference>